<keyword id="KW-0521">NADP</keyword>
<keyword id="KW-0560">Oxidoreductase</keyword>
<keyword id="KW-1185">Reference proteome</keyword>
<feature type="chain" id="PRO_0000315370" description="Trans-1,2-dihydrobenzene-1,2-diol dehydrogenase">
    <location>
        <begin position="1"/>
        <end position="330"/>
    </location>
</feature>
<feature type="site" description="May play an important role in coenzyme binding" evidence="1">
    <location>
        <position position="71"/>
    </location>
</feature>
<feature type="site" description="May play an important role in coenzyme binding" evidence="1">
    <location>
        <position position="79"/>
    </location>
</feature>
<feature type="site" description="May play an important role in coenzyme binding" evidence="1">
    <location>
        <position position="97"/>
    </location>
</feature>
<feature type="site" description="May play an important role for the adaptation of the alcohol substrate into the binding site" evidence="1">
    <location>
        <position position="176"/>
    </location>
</feature>
<feature type="site" description="May play an important role in catalytic activity" evidence="1">
    <location>
        <position position="180"/>
    </location>
</feature>
<dbReference type="EC" id="1.3.1.20"/>
<dbReference type="EC" id="1.1.1.179"/>
<dbReference type="EMBL" id="BC076913">
    <property type="protein sequence ID" value="AAH76913.1"/>
    <property type="molecule type" value="mRNA"/>
</dbReference>
<dbReference type="RefSeq" id="NP_001005045.1">
    <property type="nucleotide sequence ID" value="NM_001005045.2"/>
</dbReference>
<dbReference type="SMR" id="Q6DF30"/>
<dbReference type="FunCoup" id="Q6DF30">
    <property type="interactions" value="164"/>
</dbReference>
<dbReference type="STRING" id="8364.ENSXETP00000026524"/>
<dbReference type="PaxDb" id="8364-ENSXETP00000057315"/>
<dbReference type="DNASU" id="448579"/>
<dbReference type="GeneID" id="448579"/>
<dbReference type="KEGG" id="xtr:448579"/>
<dbReference type="AGR" id="Xenbase:XB-GENE-968486"/>
<dbReference type="CTD" id="448579"/>
<dbReference type="Xenbase" id="XB-GENE-968486">
    <property type="gene designation" value="dhdhl"/>
</dbReference>
<dbReference type="eggNOG" id="KOG2741">
    <property type="taxonomic scope" value="Eukaryota"/>
</dbReference>
<dbReference type="HOGENOM" id="CLU_023194_7_2_1"/>
<dbReference type="InParanoid" id="Q6DF30"/>
<dbReference type="OMA" id="KMIQAPF"/>
<dbReference type="OrthoDB" id="2129491at2759"/>
<dbReference type="PhylomeDB" id="Q6DF30"/>
<dbReference type="Proteomes" id="UP000008143">
    <property type="component" value="Chromosome 7"/>
</dbReference>
<dbReference type="Bgee" id="ENSXETG00000027480">
    <property type="expression patterns" value="Expressed in mesonephros and 12 other cell types or tissues"/>
</dbReference>
<dbReference type="GO" id="GO:0047837">
    <property type="term" value="F:D-xylose 1-dehydrogenase (NADP+) activity"/>
    <property type="evidence" value="ECO:0007669"/>
    <property type="project" value="UniProtKB-EC"/>
</dbReference>
<dbReference type="GO" id="GO:0000166">
    <property type="term" value="F:nucleotide binding"/>
    <property type="evidence" value="ECO:0007669"/>
    <property type="project" value="InterPro"/>
</dbReference>
<dbReference type="GO" id="GO:0047115">
    <property type="term" value="F:trans-1,2-dihydrobenzene-1,2-diol dehydrogenase activity"/>
    <property type="evidence" value="ECO:0007669"/>
    <property type="project" value="UniProtKB-EC"/>
</dbReference>
<dbReference type="FunFam" id="3.30.360.10:FF:000031">
    <property type="entry name" value="Trans-1,2-dihydrobenzene-1,2-diol dehydrogenase"/>
    <property type="match status" value="1"/>
</dbReference>
<dbReference type="FunFam" id="3.40.50.720:FF:000269">
    <property type="entry name" value="Trans-1,2-dihydrobenzene-1,2-diol dehydrogenase"/>
    <property type="match status" value="1"/>
</dbReference>
<dbReference type="Gene3D" id="3.30.360.10">
    <property type="entry name" value="Dihydrodipicolinate Reductase, domain 2"/>
    <property type="match status" value="1"/>
</dbReference>
<dbReference type="Gene3D" id="3.40.50.720">
    <property type="entry name" value="NAD(P)-binding Rossmann-like Domain"/>
    <property type="match status" value="1"/>
</dbReference>
<dbReference type="InterPro" id="IPR000683">
    <property type="entry name" value="Gfo/Idh/MocA-like_OxRdtase_N"/>
</dbReference>
<dbReference type="InterPro" id="IPR050984">
    <property type="entry name" value="Gfo/Idh/MocA_domain"/>
</dbReference>
<dbReference type="InterPro" id="IPR055170">
    <property type="entry name" value="GFO_IDH_MocA-like_dom"/>
</dbReference>
<dbReference type="InterPro" id="IPR036291">
    <property type="entry name" value="NAD(P)-bd_dom_sf"/>
</dbReference>
<dbReference type="PANTHER" id="PTHR22604">
    <property type="entry name" value="OXIDOREDUCTASES"/>
    <property type="match status" value="1"/>
</dbReference>
<dbReference type="PANTHER" id="PTHR22604:SF105">
    <property type="entry name" value="TRANS-1,2-DIHYDROBENZENE-1,2-DIOL DEHYDROGENASE"/>
    <property type="match status" value="1"/>
</dbReference>
<dbReference type="Pfam" id="PF01408">
    <property type="entry name" value="GFO_IDH_MocA"/>
    <property type="match status" value="1"/>
</dbReference>
<dbReference type="Pfam" id="PF22725">
    <property type="entry name" value="GFO_IDH_MocA_C3"/>
    <property type="match status" value="1"/>
</dbReference>
<dbReference type="SUPFAM" id="SSF55347">
    <property type="entry name" value="Glyceraldehyde-3-phosphate dehydrogenase-like, C-terminal domain"/>
    <property type="match status" value="1"/>
</dbReference>
<dbReference type="SUPFAM" id="SSF51735">
    <property type="entry name" value="NAD(P)-binding Rossmann-fold domains"/>
    <property type="match status" value="1"/>
</dbReference>
<comment type="catalytic activity">
    <reaction>
        <text>(1R,2R)-1,2-dihydrobenzene-1,2-diol + NADP(+) = catechol + NADPH + H(+)</text>
        <dbReference type="Rhea" id="RHEA:16729"/>
        <dbReference type="ChEBI" id="CHEBI:10702"/>
        <dbReference type="ChEBI" id="CHEBI:15378"/>
        <dbReference type="ChEBI" id="CHEBI:18135"/>
        <dbReference type="ChEBI" id="CHEBI:57783"/>
        <dbReference type="ChEBI" id="CHEBI:58349"/>
        <dbReference type="EC" id="1.3.1.20"/>
    </reaction>
</comment>
<comment type="catalytic activity">
    <reaction>
        <text>D-xylose + NADP(+) = D-xylono-1,5-lactone + NADPH + H(+)</text>
        <dbReference type="Rhea" id="RHEA:22000"/>
        <dbReference type="ChEBI" id="CHEBI:15378"/>
        <dbReference type="ChEBI" id="CHEBI:15867"/>
        <dbReference type="ChEBI" id="CHEBI:53455"/>
        <dbReference type="ChEBI" id="CHEBI:57783"/>
        <dbReference type="ChEBI" id="CHEBI:58349"/>
        <dbReference type="EC" id="1.1.1.179"/>
    </reaction>
</comment>
<comment type="subunit">
    <text evidence="1">Homodimer.</text>
</comment>
<comment type="similarity">
    <text evidence="2">Belongs to the Gfo/Idh/MocA family.</text>
</comment>
<gene>
    <name type="primary">dhdh</name>
</gene>
<proteinExistence type="evidence at transcript level"/>
<name>DHDH_XENTR</name>
<evidence type="ECO:0000250" key="1"/>
<evidence type="ECO:0000305" key="2"/>
<protein>
    <recommendedName>
        <fullName>Trans-1,2-dihydrobenzene-1,2-diol dehydrogenase</fullName>
        <ecNumber>1.3.1.20</ecNumber>
    </recommendedName>
    <alternativeName>
        <fullName>D-xylose 1-dehydrogenase</fullName>
    </alternativeName>
    <alternativeName>
        <fullName>D-xylose-NADP dehydrogenase</fullName>
        <ecNumber>1.1.1.179</ecNumber>
    </alternativeName>
    <alternativeName>
        <fullName>Dimeric dihydrodiol dehydrogenase</fullName>
    </alternativeName>
</protein>
<sequence>MATKWGICSAGKISNDFVVALSTLPAVDHQVVAIAARDLEKAKNFAQNHNIPKAYGSYEELAKDPDIDVIYVGAIHPVHRDVVLMCLQNGKNILCEKPLAMNAAQVQELIATARKFNVFLMEAFWSRFFPVYEEIRALLSQKAIGDVKFIRAEFGVEIYKVPRAVEKELGGGALLDIGCYCVQFVTMVFNGERPESVTAKGFLHETGVDESMSLILQYSGKRQAVLSSTIMATLPNQAAICGTKGIIQIPSDMWSPTSIIVNGKERKFDIPHTTKPMNFSNGTGMSYEAEHVRQCLLKGLKESPIMSLADSEMVASIMDEALQQLGVTYP</sequence>
<accession>Q6DF30</accession>
<organism>
    <name type="scientific">Xenopus tropicalis</name>
    <name type="common">Western clawed frog</name>
    <name type="synonym">Silurana tropicalis</name>
    <dbReference type="NCBI Taxonomy" id="8364"/>
    <lineage>
        <taxon>Eukaryota</taxon>
        <taxon>Metazoa</taxon>
        <taxon>Chordata</taxon>
        <taxon>Craniata</taxon>
        <taxon>Vertebrata</taxon>
        <taxon>Euteleostomi</taxon>
        <taxon>Amphibia</taxon>
        <taxon>Batrachia</taxon>
        <taxon>Anura</taxon>
        <taxon>Pipoidea</taxon>
        <taxon>Pipidae</taxon>
        <taxon>Xenopodinae</taxon>
        <taxon>Xenopus</taxon>
        <taxon>Silurana</taxon>
    </lineage>
</organism>
<reference key="1">
    <citation type="submission" date="2004-07" db="EMBL/GenBank/DDBJ databases">
        <authorList>
            <consortium name="NIH - Xenopus Gene Collection (XGC) project"/>
        </authorList>
    </citation>
    <scope>NUCLEOTIDE SEQUENCE [LARGE SCALE MRNA]</scope>
</reference>